<dbReference type="EMBL" id="BC118345">
    <property type="protein sequence ID" value="AAI18346.1"/>
    <property type="molecule type" value="mRNA"/>
</dbReference>
<dbReference type="RefSeq" id="NP_001069881.1">
    <property type="nucleotide sequence ID" value="NM_001076413.2"/>
</dbReference>
<dbReference type="RefSeq" id="XP_005220452.1">
    <property type="nucleotide sequence ID" value="XM_005220395.5"/>
</dbReference>
<dbReference type="SMR" id="Q17QI1"/>
<dbReference type="FunCoup" id="Q17QI1">
    <property type="interactions" value="3375"/>
</dbReference>
<dbReference type="STRING" id="9913.ENSBTAP00000055462"/>
<dbReference type="PaxDb" id="9913-ENSBTAP00000055462"/>
<dbReference type="Ensembl" id="ENSBTAT00000065281.3">
    <property type="protein sequence ID" value="ENSBTAP00000055462.1"/>
    <property type="gene ID" value="ENSBTAG00000047214.3"/>
</dbReference>
<dbReference type="GeneID" id="616205"/>
<dbReference type="KEGG" id="bta:616205"/>
<dbReference type="CTD" id="58485"/>
<dbReference type="VEuPathDB" id="HostDB:ENSBTAG00000047214"/>
<dbReference type="VGNC" id="VGNC:36284">
    <property type="gene designation" value="TRAPPC1"/>
</dbReference>
<dbReference type="eggNOG" id="KOG3368">
    <property type="taxonomic scope" value="Eukaryota"/>
</dbReference>
<dbReference type="GeneTree" id="ENSGT00940000153761"/>
<dbReference type="HOGENOM" id="CLU_053380_4_1_1"/>
<dbReference type="InParanoid" id="Q17QI1"/>
<dbReference type="OMA" id="GKLMYGM"/>
<dbReference type="OrthoDB" id="246406at2759"/>
<dbReference type="TreeFam" id="TF323681"/>
<dbReference type="Reactome" id="R-BTA-204005">
    <property type="pathway name" value="COPII-mediated vesicle transport"/>
</dbReference>
<dbReference type="Reactome" id="R-BTA-6798695">
    <property type="pathway name" value="Neutrophil degranulation"/>
</dbReference>
<dbReference type="Reactome" id="R-BTA-8876198">
    <property type="pathway name" value="RAB GEFs exchange GTP for GDP on RABs"/>
</dbReference>
<dbReference type="Proteomes" id="UP000009136">
    <property type="component" value="Chromosome 19"/>
</dbReference>
<dbReference type="Bgee" id="ENSBTAG00000047214">
    <property type="expression patterns" value="Expressed in retina and 104 other cell types or tissues"/>
</dbReference>
<dbReference type="GO" id="GO:0005783">
    <property type="term" value="C:endoplasmic reticulum"/>
    <property type="evidence" value="ECO:0007669"/>
    <property type="project" value="UniProtKB-SubCell"/>
</dbReference>
<dbReference type="GO" id="GO:0005794">
    <property type="term" value="C:Golgi apparatus"/>
    <property type="evidence" value="ECO:0007669"/>
    <property type="project" value="UniProtKB-SubCell"/>
</dbReference>
<dbReference type="GO" id="GO:0030008">
    <property type="term" value="C:TRAPP complex"/>
    <property type="evidence" value="ECO:0000318"/>
    <property type="project" value="GO_Central"/>
</dbReference>
<dbReference type="GO" id="GO:0006888">
    <property type="term" value="P:endoplasmic reticulum to Golgi vesicle-mediated transport"/>
    <property type="evidence" value="ECO:0000318"/>
    <property type="project" value="GO_Central"/>
</dbReference>
<dbReference type="CDD" id="cd14855">
    <property type="entry name" value="TRAPPC1_MUM2"/>
    <property type="match status" value="1"/>
</dbReference>
<dbReference type="FunFam" id="3.30.450.70:FF:000004">
    <property type="entry name" value="Trafficking protein particle complex 1"/>
    <property type="match status" value="1"/>
</dbReference>
<dbReference type="Gene3D" id="3.30.450.70">
    <property type="match status" value="1"/>
</dbReference>
<dbReference type="InterPro" id="IPR011012">
    <property type="entry name" value="Longin-like_dom_sf"/>
</dbReference>
<dbReference type="InterPro" id="IPR007233">
    <property type="entry name" value="TRAPPC"/>
</dbReference>
<dbReference type="PANTHER" id="PTHR23249">
    <property type="entry name" value="TRAFFICKING PROTEIN PARTICLE COMPLEX SUBUNIT"/>
    <property type="match status" value="1"/>
</dbReference>
<dbReference type="PANTHER" id="PTHR23249:SF16">
    <property type="entry name" value="TRAFFICKING PROTEIN PARTICLE COMPLEX SUBUNIT 1"/>
    <property type="match status" value="1"/>
</dbReference>
<dbReference type="Pfam" id="PF04099">
    <property type="entry name" value="Sybindin"/>
    <property type="match status" value="1"/>
</dbReference>
<dbReference type="SMART" id="SM01399">
    <property type="entry name" value="Sybindin"/>
    <property type="match status" value="1"/>
</dbReference>
<dbReference type="SUPFAM" id="SSF64356">
    <property type="entry name" value="SNARE-like"/>
    <property type="match status" value="1"/>
</dbReference>
<proteinExistence type="evidence at transcript level"/>
<comment type="function">
    <text evidence="1">May play a role in vesicular transport from endoplasmic reticulum to Golgi.</text>
</comment>
<comment type="subunit">
    <text evidence="2">Part of the multisubunit transport protein particle (TRAPP) complex. The heterodimer TRAPPC6B-TRAPPC3 interacts with TRAPPC1 likely providing a core for TRAPP complex formation.</text>
</comment>
<comment type="subcellular location">
    <subcellularLocation>
        <location evidence="1">Golgi apparatus</location>
        <location evidence="1">cis-Golgi network</location>
    </subcellularLocation>
    <subcellularLocation>
        <location evidence="1">Endoplasmic reticulum</location>
    </subcellularLocation>
</comment>
<comment type="similarity">
    <text evidence="3">Belongs to the TRAPP small subunits family. BET5 subfamily.</text>
</comment>
<feature type="chain" id="PRO_0000260207" description="Trafficking protein particle complex subunit 1">
    <location>
        <begin position="1"/>
        <end position="145"/>
    </location>
</feature>
<reference key="1">
    <citation type="submission" date="2006-06" db="EMBL/GenBank/DDBJ databases">
        <authorList>
            <consortium name="NIH - Mammalian Gene Collection (MGC) project"/>
        </authorList>
    </citation>
    <scope>NUCLEOTIDE SEQUENCE [LARGE SCALE MRNA]</scope>
    <source>
        <strain>Hereford</strain>
        <tissue>Fetal pons</tissue>
    </source>
</reference>
<sequence>MTVHNLYLFDRNGVCLHYSEWHRKKQAGIPKEEEYKLMYGMLFSIRSFVSKMSPLDMKDGFLAFQTSRYKLHYYETPTGIKVVMNTDLGVGPIRDVLHHIYSALYVELVVKNPLCPLGQTVQSELFRSRLDSYVRSLPFFSARAG</sequence>
<gene>
    <name type="primary">TRAPPC1</name>
</gene>
<name>TPPC1_BOVIN</name>
<accession>Q17QI1</accession>
<protein>
    <recommendedName>
        <fullName>Trafficking protein particle complex subunit 1</fullName>
    </recommendedName>
</protein>
<evidence type="ECO:0000250" key="1"/>
<evidence type="ECO:0000250" key="2">
    <source>
        <dbReference type="UniProtKB" id="Q9Y5R8"/>
    </source>
</evidence>
<evidence type="ECO:0000305" key="3"/>
<keyword id="KW-0256">Endoplasmic reticulum</keyword>
<keyword id="KW-0931">ER-Golgi transport</keyword>
<keyword id="KW-0333">Golgi apparatus</keyword>
<keyword id="KW-1185">Reference proteome</keyword>
<keyword id="KW-0813">Transport</keyword>
<organism>
    <name type="scientific">Bos taurus</name>
    <name type="common">Bovine</name>
    <dbReference type="NCBI Taxonomy" id="9913"/>
    <lineage>
        <taxon>Eukaryota</taxon>
        <taxon>Metazoa</taxon>
        <taxon>Chordata</taxon>
        <taxon>Craniata</taxon>
        <taxon>Vertebrata</taxon>
        <taxon>Euteleostomi</taxon>
        <taxon>Mammalia</taxon>
        <taxon>Eutheria</taxon>
        <taxon>Laurasiatheria</taxon>
        <taxon>Artiodactyla</taxon>
        <taxon>Ruminantia</taxon>
        <taxon>Pecora</taxon>
        <taxon>Bovidae</taxon>
        <taxon>Bovinae</taxon>
        <taxon>Bos</taxon>
    </lineage>
</organism>